<gene>
    <name evidence="1" type="primary">mdh</name>
    <name type="ordered locus">Sca_0338</name>
</gene>
<accession>B9DK67</accession>
<keyword id="KW-0520">NAD</keyword>
<keyword id="KW-0560">Oxidoreductase</keyword>
<keyword id="KW-1185">Reference proteome</keyword>
<keyword id="KW-0816">Tricarboxylic acid cycle</keyword>
<organism>
    <name type="scientific">Staphylococcus carnosus (strain TM300)</name>
    <dbReference type="NCBI Taxonomy" id="396513"/>
    <lineage>
        <taxon>Bacteria</taxon>
        <taxon>Bacillati</taxon>
        <taxon>Bacillota</taxon>
        <taxon>Bacilli</taxon>
        <taxon>Bacillales</taxon>
        <taxon>Staphylococcaceae</taxon>
        <taxon>Staphylococcus</taxon>
    </lineage>
</organism>
<evidence type="ECO:0000255" key="1">
    <source>
        <dbReference type="HAMAP-Rule" id="MF_00487"/>
    </source>
</evidence>
<proteinExistence type="inferred from homology"/>
<feature type="chain" id="PRO_1000191658" description="Malate dehydrogenase">
    <location>
        <begin position="1"/>
        <end position="311"/>
    </location>
</feature>
<feature type="active site" description="Proton acceptor" evidence="1">
    <location>
        <position position="178"/>
    </location>
</feature>
<feature type="binding site" evidence="1">
    <location>
        <begin position="10"/>
        <end position="15"/>
    </location>
    <ligand>
        <name>NAD(+)</name>
        <dbReference type="ChEBI" id="CHEBI:57540"/>
    </ligand>
</feature>
<feature type="binding site" evidence="1">
    <location>
        <position position="85"/>
    </location>
    <ligand>
        <name>substrate</name>
    </ligand>
</feature>
<feature type="binding site" evidence="1">
    <location>
        <position position="91"/>
    </location>
    <ligand>
        <name>substrate</name>
    </ligand>
</feature>
<feature type="binding site" evidence="1">
    <location>
        <position position="98"/>
    </location>
    <ligand>
        <name>NAD(+)</name>
        <dbReference type="ChEBI" id="CHEBI:57540"/>
    </ligand>
</feature>
<feature type="binding site" evidence="1">
    <location>
        <begin position="121"/>
        <end position="123"/>
    </location>
    <ligand>
        <name>NAD(+)</name>
        <dbReference type="ChEBI" id="CHEBI:57540"/>
    </ligand>
</feature>
<feature type="binding site" evidence="1">
    <location>
        <position position="123"/>
    </location>
    <ligand>
        <name>substrate</name>
    </ligand>
</feature>
<feature type="binding site" evidence="1">
    <location>
        <position position="154"/>
    </location>
    <ligand>
        <name>substrate</name>
    </ligand>
</feature>
<sequence>MAKNKIAIIGAGHTGSTLAFIIAERALADVVLLEIPKNEKPARGKALDIKESGPILGFNGNVLGTSDYQDIAGADIVVITAGAARKPGMSRDDLIQINENVMAQVTEGIKKYAPESKIIVLTNPVDAMTYAVYKLSGFPKERVLGQSGILDTARYRTFVSEALNVAQTDVTGLVLGGHGDTMVPLLSTTMVGGVPLRELLAQDKIDAIVERTRKGGAEIVGLLGNGSAYYAPAAAIYEMAAAILNDERRLVPAITYLDGEYGFKDICLGVPTILGANGVEKVVEIELSDDEQQLRDSADAVEDVKSALKNK</sequence>
<comment type="function">
    <text evidence="1">Catalyzes the reversible oxidation of malate to oxaloacetate.</text>
</comment>
<comment type="catalytic activity">
    <reaction evidence="1">
        <text>(S)-malate + NAD(+) = oxaloacetate + NADH + H(+)</text>
        <dbReference type="Rhea" id="RHEA:21432"/>
        <dbReference type="ChEBI" id="CHEBI:15378"/>
        <dbReference type="ChEBI" id="CHEBI:15589"/>
        <dbReference type="ChEBI" id="CHEBI:16452"/>
        <dbReference type="ChEBI" id="CHEBI:57540"/>
        <dbReference type="ChEBI" id="CHEBI:57945"/>
        <dbReference type="EC" id="1.1.1.37"/>
    </reaction>
</comment>
<comment type="similarity">
    <text evidence="1">Belongs to the LDH/MDH superfamily. MDH type 3 family.</text>
</comment>
<protein>
    <recommendedName>
        <fullName evidence="1">Malate dehydrogenase</fullName>
        <ecNumber evidence="1">1.1.1.37</ecNumber>
    </recommendedName>
</protein>
<dbReference type="EC" id="1.1.1.37" evidence="1"/>
<dbReference type="EMBL" id="AM295250">
    <property type="protein sequence ID" value="CAL27251.1"/>
    <property type="molecule type" value="Genomic_DNA"/>
</dbReference>
<dbReference type="RefSeq" id="WP_015899596.1">
    <property type="nucleotide sequence ID" value="NC_012121.1"/>
</dbReference>
<dbReference type="SMR" id="B9DK67"/>
<dbReference type="GeneID" id="93795267"/>
<dbReference type="KEGG" id="sca:SCA_0338"/>
<dbReference type="eggNOG" id="COG0039">
    <property type="taxonomic scope" value="Bacteria"/>
</dbReference>
<dbReference type="HOGENOM" id="CLU_045401_2_1_9"/>
<dbReference type="OrthoDB" id="9802969at2"/>
<dbReference type="BioCyc" id="SCAR396513:SCA_RS01725-MONOMER"/>
<dbReference type="Proteomes" id="UP000000444">
    <property type="component" value="Chromosome"/>
</dbReference>
<dbReference type="GO" id="GO:0004459">
    <property type="term" value="F:L-lactate dehydrogenase activity"/>
    <property type="evidence" value="ECO:0007669"/>
    <property type="project" value="TreeGrafter"/>
</dbReference>
<dbReference type="GO" id="GO:0030060">
    <property type="term" value="F:L-malate dehydrogenase (NAD+) activity"/>
    <property type="evidence" value="ECO:0007669"/>
    <property type="project" value="UniProtKB-UniRule"/>
</dbReference>
<dbReference type="GO" id="GO:0006089">
    <property type="term" value="P:lactate metabolic process"/>
    <property type="evidence" value="ECO:0007669"/>
    <property type="project" value="TreeGrafter"/>
</dbReference>
<dbReference type="GO" id="GO:0006099">
    <property type="term" value="P:tricarboxylic acid cycle"/>
    <property type="evidence" value="ECO:0007669"/>
    <property type="project" value="UniProtKB-UniRule"/>
</dbReference>
<dbReference type="CDD" id="cd01339">
    <property type="entry name" value="LDH-like_MDH"/>
    <property type="match status" value="1"/>
</dbReference>
<dbReference type="FunFam" id="3.40.50.720:FF:000018">
    <property type="entry name" value="Malate dehydrogenase"/>
    <property type="match status" value="1"/>
</dbReference>
<dbReference type="FunFam" id="3.90.110.10:FF:000004">
    <property type="entry name" value="Malate dehydrogenase"/>
    <property type="match status" value="1"/>
</dbReference>
<dbReference type="Gene3D" id="3.90.110.10">
    <property type="entry name" value="Lactate dehydrogenase/glycoside hydrolase, family 4, C-terminal"/>
    <property type="match status" value="1"/>
</dbReference>
<dbReference type="Gene3D" id="3.40.50.720">
    <property type="entry name" value="NAD(P)-binding Rossmann-like Domain"/>
    <property type="match status" value="1"/>
</dbReference>
<dbReference type="HAMAP" id="MF_00487">
    <property type="entry name" value="Malate_dehydrog_3"/>
    <property type="match status" value="1"/>
</dbReference>
<dbReference type="InterPro" id="IPR001557">
    <property type="entry name" value="L-lactate/malate_DH"/>
</dbReference>
<dbReference type="InterPro" id="IPR022383">
    <property type="entry name" value="Lactate/malate_DH_C"/>
</dbReference>
<dbReference type="InterPro" id="IPR001236">
    <property type="entry name" value="Lactate/malate_DH_N"/>
</dbReference>
<dbReference type="InterPro" id="IPR015955">
    <property type="entry name" value="Lactate_DH/Glyco_Ohase_4_C"/>
</dbReference>
<dbReference type="InterPro" id="IPR011275">
    <property type="entry name" value="Malate_DH_type3"/>
</dbReference>
<dbReference type="InterPro" id="IPR036291">
    <property type="entry name" value="NAD(P)-bd_dom_sf"/>
</dbReference>
<dbReference type="NCBIfam" id="TIGR01763">
    <property type="entry name" value="MalateDH_bact"/>
    <property type="match status" value="1"/>
</dbReference>
<dbReference type="NCBIfam" id="NF004863">
    <property type="entry name" value="PRK06223.1"/>
    <property type="match status" value="1"/>
</dbReference>
<dbReference type="PANTHER" id="PTHR43128">
    <property type="entry name" value="L-2-HYDROXYCARBOXYLATE DEHYDROGENASE (NAD(P)(+))"/>
    <property type="match status" value="1"/>
</dbReference>
<dbReference type="PANTHER" id="PTHR43128:SF16">
    <property type="entry name" value="L-LACTATE DEHYDROGENASE"/>
    <property type="match status" value="1"/>
</dbReference>
<dbReference type="Pfam" id="PF02866">
    <property type="entry name" value="Ldh_1_C"/>
    <property type="match status" value="1"/>
</dbReference>
<dbReference type="Pfam" id="PF00056">
    <property type="entry name" value="Ldh_1_N"/>
    <property type="match status" value="1"/>
</dbReference>
<dbReference type="PIRSF" id="PIRSF000102">
    <property type="entry name" value="Lac_mal_DH"/>
    <property type="match status" value="1"/>
</dbReference>
<dbReference type="PRINTS" id="PR00086">
    <property type="entry name" value="LLDHDRGNASE"/>
</dbReference>
<dbReference type="SUPFAM" id="SSF56327">
    <property type="entry name" value="LDH C-terminal domain-like"/>
    <property type="match status" value="1"/>
</dbReference>
<dbReference type="SUPFAM" id="SSF51735">
    <property type="entry name" value="NAD(P)-binding Rossmann-fold domains"/>
    <property type="match status" value="1"/>
</dbReference>
<name>MDH_STACT</name>
<reference key="1">
    <citation type="journal article" date="2009" name="Appl. Environ. Microbiol.">
        <title>Genome analysis of the meat starter culture bacterium Staphylococcus carnosus TM300.</title>
        <authorList>
            <person name="Rosenstein R."/>
            <person name="Nerz C."/>
            <person name="Biswas L."/>
            <person name="Resch A."/>
            <person name="Raddatz G."/>
            <person name="Schuster S.C."/>
            <person name="Goetz F."/>
        </authorList>
    </citation>
    <scope>NUCLEOTIDE SEQUENCE [LARGE SCALE GENOMIC DNA]</scope>
    <source>
        <strain>TM300</strain>
    </source>
</reference>